<feature type="chain" id="PRO_0000328869" description="Cytosolic endo-beta-N-acetylglucosaminidase">
    <location>
        <begin position="1"/>
        <end position="728"/>
    </location>
</feature>
<feature type="domain" description="BRCT">
    <location>
        <begin position="287"/>
        <end position="381"/>
    </location>
</feature>
<keyword id="KW-0963">Cytoplasm</keyword>
<keyword id="KW-0903">Direct protein sequencing</keyword>
<keyword id="KW-0326">Glycosidase</keyword>
<keyword id="KW-0378">Hydrolase</keyword>
<keyword id="KW-1185">Reference proteome</keyword>
<accession>P0C7A1</accession>
<name>ENASE_CHICK</name>
<comment type="function">
    <text>Endoglycosidase that releases N-glycans from glycoproteins by cleaving the beta-1,4-glycosidic bond in the N,N'-diacetylchitobiose core. Involved in the processing of free oligosaccharides in the cytosol.</text>
</comment>
<comment type="catalytic activity">
    <reaction>
        <text>an N(4)-(oligosaccharide-(1-&gt;3)-[oligosaccharide-(1-&gt;6)]-beta-D-Man-(1-&gt;4)-beta-D-GlcNAc-(1-&gt;4)-alpha-D-GlcNAc)-L-asparaginyl-[protein] + H2O = an oligosaccharide-(1-&gt;3)-[oligosaccharide-(1-&gt;6)]-beta-D-Man-(1-&gt;4)-D-GlcNAc + N(4)-(N-acetyl-beta-D-glucosaminyl)-L-asparaginyl-[protein]</text>
        <dbReference type="Rhea" id="RHEA:73067"/>
        <dbReference type="Rhea" id="RHEA-COMP:12603"/>
        <dbReference type="Rhea" id="RHEA-COMP:18176"/>
        <dbReference type="ChEBI" id="CHEBI:15377"/>
        <dbReference type="ChEBI" id="CHEBI:132248"/>
        <dbReference type="ChEBI" id="CHEBI:192714"/>
        <dbReference type="ChEBI" id="CHEBI:192715"/>
        <dbReference type="EC" id="3.2.1.96"/>
    </reaction>
</comment>
<comment type="subcellular location">
    <subcellularLocation>
        <location evidence="2">Cytoplasm</location>
        <location evidence="2">Cytosol</location>
    </subcellularLocation>
</comment>
<comment type="similarity">
    <text evidence="1">Belongs to the glycosyl hydrolase 85 family.</text>
</comment>
<evidence type="ECO:0000305" key="1"/>
<evidence type="ECO:0000305" key="2">
    <source>
    </source>
</evidence>
<dbReference type="EC" id="3.2.1.96"/>
<dbReference type="SMR" id="P0C7A1"/>
<dbReference type="FunCoup" id="P0C7A1">
    <property type="interactions" value="43"/>
</dbReference>
<dbReference type="STRING" id="9031.ENSGALP00000019265"/>
<dbReference type="ChEMBL" id="CHEMBL1075083"/>
<dbReference type="PaxDb" id="9031-ENSGALP00000019265"/>
<dbReference type="VEuPathDB" id="HostDB:geneid_430102"/>
<dbReference type="eggNOG" id="KOG2331">
    <property type="taxonomic scope" value="Eukaryota"/>
</dbReference>
<dbReference type="InParanoid" id="P0C7A1"/>
<dbReference type="OrthoDB" id="284473at2759"/>
<dbReference type="PhylomeDB" id="P0C7A1"/>
<dbReference type="Proteomes" id="UP000000539">
    <property type="component" value="Unassembled WGS sequence"/>
</dbReference>
<dbReference type="GO" id="GO:0005829">
    <property type="term" value="C:cytosol"/>
    <property type="evidence" value="ECO:0007669"/>
    <property type="project" value="UniProtKB-SubCell"/>
</dbReference>
<dbReference type="GO" id="GO:0005615">
    <property type="term" value="C:extracellular space"/>
    <property type="evidence" value="ECO:0000314"/>
    <property type="project" value="AgBase"/>
</dbReference>
<dbReference type="GO" id="GO:0005764">
    <property type="term" value="C:lysosome"/>
    <property type="evidence" value="ECO:0000304"/>
    <property type="project" value="AgBase"/>
</dbReference>
<dbReference type="GO" id="GO:0016231">
    <property type="term" value="F:beta-N-acetylglucosaminidase activity"/>
    <property type="evidence" value="ECO:0000314"/>
    <property type="project" value="AgBase"/>
</dbReference>
<dbReference type="GO" id="GO:0016787">
    <property type="term" value="F:hydrolase activity"/>
    <property type="evidence" value="ECO:0000304"/>
    <property type="project" value="AgBase"/>
</dbReference>
<dbReference type="GO" id="GO:0033925">
    <property type="term" value="F:mannosyl-glycoprotein endo-beta-N-acetylglucosaminidase activity"/>
    <property type="evidence" value="ECO:0000318"/>
    <property type="project" value="GO_Central"/>
</dbReference>
<dbReference type="GO" id="GO:0006491">
    <property type="term" value="P:N-glycan processing"/>
    <property type="evidence" value="ECO:0000318"/>
    <property type="project" value="GO_Central"/>
</dbReference>
<dbReference type="CDD" id="cd06547">
    <property type="entry name" value="GH85_ENGase"/>
    <property type="match status" value="1"/>
</dbReference>
<dbReference type="FunFam" id="3.20.20.80:FF:000043">
    <property type="entry name" value="cytosolic endo-beta-N-acetylglucosaminidase"/>
    <property type="match status" value="1"/>
</dbReference>
<dbReference type="Gene3D" id="2.60.120.40">
    <property type="match status" value="1"/>
</dbReference>
<dbReference type="Gene3D" id="2.60.120.260">
    <property type="entry name" value="Galactose-binding domain-like"/>
    <property type="match status" value="1"/>
</dbReference>
<dbReference type="Gene3D" id="3.20.20.80">
    <property type="entry name" value="Glycosidases"/>
    <property type="match status" value="1"/>
</dbReference>
<dbReference type="InterPro" id="IPR001073">
    <property type="entry name" value="C1q_dom"/>
</dbReference>
<dbReference type="InterPro" id="IPR032979">
    <property type="entry name" value="ENGase"/>
</dbReference>
<dbReference type="InterPro" id="IPR005201">
    <property type="entry name" value="Glyco_hydro_85"/>
</dbReference>
<dbReference type="InterPro" id="IPR008983">
    <property type="entry name" value="Tumour_necrosis_fac-like_dom"/>
</dbReference>
<dbReference type="PANTHER" id="PTHR13246:SF1">
    <property type="entry name" value="CYTOSOLIC ENDO-BETA-N-ACETYLGLUCOSAMINIDASE"/>
    <property type="match status" value="1"/>
</dbReference>
<dbReference type="PANTHER" id="PTHR13246">
    <property type="entry name" value="ENDO BETA N-ACETYLGLUCOSAMINIDASE"/>
    <property type="match status" value="1"/>
</dbReference>
<dbReference type="Pfam" id="PF00386">
    <property type="entry name" value="C1q"/>
    <property type="match status" value="1"/>
</dbReference>
<dbReference type="Pfam" id="PF03644">
    <property type="entry name" value="Glyco_hydro_85"/>
    <property type="match status" value="1"/>
</dbReference>
<dbReference type="SUPFAM" id="SSF49842">
    <property type="entry name" value="TNF-like"/>
    <property type="match status" value="1"/>
</dbReference>
<dbReference type="PROSITE" id="PS50871">
    <property type="entry name" value="C1Q"/>
    <property type="match status" value="1"/>
</dbReference>
<proteinExistence type="evidence at protein level"/>
<protein>
    <recommendedName>
        <fullName>Cytosolic endo-beta-N-acetylglucosaminidase</fullName>
        <shortName>ENGase</shortName>
        <ecNumber>3.2.1.96</ecNumber>
    </recommendedName>
</protein>
<sequence>MQSQSVMLELREQDEVWVRLYKGERENAVFSDEYDTYITFSGHLINFQPAAEPLGTTVLHAAVDTRPQPARYFDTGTTEPVSFFLSGLEELLAWHPSSDDEFNVCAVPLAQRQPPLHSRRPRTLLCHDMRGGYLEDRFIQGSATRNPYVFYHWRYVDIFVYFSHHTVTIPPVCWTNAAHRNGVPVLGTFITEWADGEKLCEAFLAGGEDAYRAVSHQLARIAQHYRFDGWLINIENALSAAAVGNLSPFLRHLTAEVHGAVPGGLVIWYDSILESGTLRWQNELNQQNRVFFDACDGLFVNYNWKEEHLERTRELAGQRHADVYIGVDVFARGDVVGGGFDTNKSLSLIRKHGLSAAIFAPGWVYKHLGEENFLLNEDKFWGLLEDYLPTHSICTLPLATSFSVGMGTGMFLAGKEEEAGPWYNLSAQEIQPLYPERRGWLSTSCCLQDAWCGGSSLRVQGTIPPGEERVAIRLSLWVDLGSSGFSLSICGTLASGPHRDDFTVALELTTWHSSRCHDGTVTVLPSEDEPHGRHHPHLLPAPPPALSRMLAACSHGAQGWTSRCYEQELRGCSLRDLSLLVSRQQASPQETSFSCLLGELRVLDAGSMAASPPQVQSLTASQLWWQDGPSAEQLSLSLTLRWAFPPGRAACFRVLSQGARCHRAQPAQPQLLGLAHGCQYRAVGLAVPRPAPGQSCQLELLVEPVLPSELPVGPERWGRLLLVYSEPA</sequence>
<organism>
    <name type="scientific">Gallus gallus</name>
    <name type="common">Chicken</name>
    <dbReference type="NCBI Taxonomy" id="9031"/>
    <lineage>
        <taxon>Eukaryota</taxon>
        <taxon>Metazoa</taxon>
        <taxon>Chordata</taxon>
        <taxon>Craniata</taxon>
        <taxon>Vertebrata</taxon>
        <taxon>Euteleostomi</taxon>
        <taxon>Archelosauria</taxon>
        <taxon>Archosauria</taxon>
        <taxon>Dinosauria</taxon>
        <taxon>Saurischia</taxon>
        <taxon>Theropoda</taxon>
        <taxon>Coelurosauria</taxon>
        <taxon>Aves</taxon>
        <taxon>Neognathae</taxon>
        <taxon>Galloanserae</taxon>
        <taxon>Galliformes</taxon>
        <taxon>Phasianidae</taxon>
        <taxon>Phasianinae</taxon>
        <taxon>Gallus</taxon>
    </lineage>
</organism>
<gene>
    <name type="primary">ENGASE</name>
</gene>
<reference key="1">
    <citation type="journal article" date="2004" name="Nature">
        <title>Sequence and comparative analysis of the chicken genome provide unique perspectives on vertebrate evolution.</title>
        <authorList>
            <person name="Hillier L.W."/>
            <person name="Miller W."/>
            <person name="Birney E."/>
            <person name="Warren W."/>
            <person name="Hardison R.C."/>
            <person name="Ponting C.P."/>
            <person name="Bork P."/>
            <person name="Burt D.W."/>
            <person name="Groenen M.A.M."/>
            <person name="Delany M.E."/>
            <person name="Dodgson J.B."/>
            <person name="Chinwalla A.T."/>
            <person name="Cliften P.F."/>
            <person name="Clifton S.W."/>
            <person name="Delehaunty K.D."/>
            <person name="Fronick C."/>
            <person name="Fulton R.S."/>
            <person name="Graves T.A."/>
            <person name="Kremitzki C."/>
            <person name="Layman D."/>
            <person name="Magrini V."/>
            <person name="McPherson J.D."/>
            <person name="Miner T.L."/>
            <person name="Minx P."/>
            <person name="Nash W.E."/>
            <person name="Nhan M.N."/>
            <person name="Nelson J.O."/>
            <person name="Oddy L.G."/>
            <person name="Pohl C.S."/>
            <person name="Randall-Maher J."/>
            <person name="Smith S.M."/>
            <person name="Wallis J.W."/>
            <person name="Yang S.-P."/>
            <person name="Romanov M.N."/>
            <person name="Rondelli C.M."/>
            <person name="Paton B."/>
            <person name="Smith J."/>
            <person name="Morrice D."/>
            <person name="Daniels L."/>
            <person name="Tempest H.G."/>
            <person name="Robertson L."/>
            <person name="Masabanda J.S."/>
            <person name="Griffin D.K."/>
            <person name="Vignal A."/>
            <person name="Fillon V."/>
            <person name="Jacobbson L."/>
            <person name="Kerje S."/>
            <person name="Andersson L."/>
            <person name="Crooijmans R.P."/>
            <person name="Aerts J."/>
            <person name="van der Poel J.J."/>
            <person name="Ellegren H."/>
            <person name="Caldwell R.B."/>
            <person name="Hubbard S.J."/>
            <person name="Grafham D.V."/>
            <person name="Kierzek A.M."/>
            <person name="McLaren S.R."/>
            <person name="Overton I.M."/>
            <person name="Arakawa H."/>
            <person name="Beattie K.J."/>
            <person name="Bezzubov Y."/>
            <person name="Boardman P.E."/>
            <person name="Bonfield J.K."/>
            <person name="Croning M.D.R."/>
            <person name="Davies R.M."/>
            <person name="Francis M.D."/>
            <person name="Humphray S.J."/>
            <person name="Scott C.E."/>
            <person name="Taylor R.G."/>
            <person name="Tickle C."/>
            <person name="Brown W.R.A."/>
            <person name="Rogers J."/>
            <person name="Buerstedde J.-M."/>
            <person name="Wilson S.A."/>
            <person name="Stubbs L."/>
            <person name="Ovcharenko I."/>
            <person name="Gordon L."/>
            <person name="Lucas S."/>
            <person name="Miller M.M."/>
            <person name="Inoko H."/>
            <person name="Shiina T."/>
            <person name="Kaufman J."/>
            <person name="Salomonsen J."/>
            <person name="Skjoedt K."/>
            <person name="Wong G.K.-S."/>
            <person name="Wang J."/>
            <person name="Liu B."/>
            <person name="Wang J."/>
            <person name="Yu J."/>
            <person name="Yang H."/>
            <person name="Nefedov M."/>
            <person name="Koriabine M."/>
            <person name="Dejong P.J."/>
            <person name="Goodstadt L."/>
            <person name="Webber C."/>
            <person name="Dickens N.J."/>
            <person name="Letunic I."/>
            <person name="Suyama M."/>
            <person name="Torrents D."/>
            <person name="von Mering C."/>
            <person name="Zdobnov E.M."/>
            <person name="Makova K."/>
            <person name="Nekrutenko A."/>
            <person name="Elnitski L."/>
            <person name="Eswara P."/>
            <person name="King D.C."/>
            <person name="Yang S.-P."/>
            <person name="Tyekucheva S."/>
            <person name="Radakrishnan A."/>
            <person name="Harris R.S."/>
            <person name="Chiaromonte F."/>
            <person name="Taylor J."/>
            <person name="He J."/>
            <person name="Rijnkels M."/>
            <person name="Griffiths-Jones S."/>
            <person name="Ureta-Vidal A."/>
            <person name="Hoffman M.M."/>
            <person name="Severin J."/>
            <person name="Searle S.M.J."/>
            <person name="Law A.S."/>
            <person name="Speed D."/>
            <person name="Waddington D."/>
            <person name="Cheng Z."/>
            <person name="Tuzun E."/>
            <person name="Eichler E."/>
            <person name="Bao Z."/>
            <person name="Flicek P."/>
            <person name="Shteynberg D.D."/>
            <person name="Brent M.R."/>
            <person name="Bye J.M."/>
            <person name="Huckle E.J."/>
            <person name="Chatterji S."/>
            <person name="Dewey C."/>
            <person name="Pachter L."/>
            <person name="Kouranov A."/>
            <person name="Mourelatos Z."/>
            <person name="Hatzigeorgiou A.G."/>
            <person name="Paterson A.H."/>
            <person name="Ivarie R."/>
            <person name="Brandstrom M."/>
            <person name="Axelsson E."/>
            <person name="Backstrom N."/>
            <person name="Berlin S."/>
            <person name="Webster M.T."/>
            <person name="Pourquie O."/>
            <person name="Reymond A."/>
            <person name="Ucla C."/>
            <person name="Antonarakis S.E."/>
            <person name="Long M."/>
            <person name="Emerson J.J."/>
            <person name="Betran E."/>
            <person name="Dupanloup I."/>
            <person name="Kaessmann H."/>
            <person name="Hinrichs A.S."/>
            <person name="Bejerano G."/>
            <person name="Furey T.S."/>
            <person name="Harte R.A."/>
            <person name="Raney B."/>
            <person name="Siepel A."/>
            <person name="Kent W.J."/>
            <person name="Haussler D."/>
            <person name="Eyras E."/>
            <person name="Castelo R."/>
            <person name="Abril J.F."/>
            <person name="Castellano S."/>
            <person name="Camara F."/>
            <person name="Parra G."/>
            <person name="Guigo R."/>
            <person name="Bourque G."/>
            <person name="Tesler G."/>
            <person name="Pevzner P.A."/>
            <person name="Smit A."/>
            <person name="Fulton L.A."/>
            <person name="Mardis E.R."/>
            <person name="Wilson R.K."/>
        </authorList>
    </citation>
    <scope>NUCLEOTIDE SEQUENCE [LARGE SCALE GENOMIC DNA]</scope>
    <source>
        <strain>Red jungle fowl</strain>
    </source>
</reference>
<reference key="2">
    <citation type="journal article" date="2002" name="Proc. Natl. Acad. Sci. U.S.A.">
        <title>Endo-beta-N-acetylglucosaminidase, an enzyme involved in processing of free oligosaccharides in the cytosol.</title>
        <authorList>
            <person name="Suzuki T."/>
            <person name="Yano K."/>
            <person name="Sugimoto S."/>
            <person name="Kitajima K."/>
            <person name="Lennarz W.J."/>
            <person name="Inoue S."/>
            <person name="Inoue Y."/>
            <person name="Emori Y."/>
        </authorList>
    </citation>
    <scope>PROTEIN SEQUENCE OF 51-76</scope>
    <scope>SUBCELLULAR LOCATION</scope>
</reference>